<reference key="1">
    <citation type="submission" date="2009-07" db="EMBL/GenBank/DDBJ databases">
        <title>Complete sequence of Pectobacterium carotovorum subsp. carotovorum PC1.</title>
        <authorList>
            <consortium name="US DOE Joint Genome Institute"/>
            <person name="Lucas S."/>
            <person name="Copeland A."/>
            <person name="Lapidus A."/>
            <person name="Glavina del Rio T."/>
            <person name="Tice H."/>
            <person name="Bruce D."/>
            <person name="Goodwin L."/>
            <person name="Pitluck S."/>
            <person name="Munk A.C."/>
            <person name="Brettin T."/>
            <person name="Detter J.C."/>
            <person name="Han C."/>
            <person name="Tapia R."/>
            <person name="Larimer F."/>
            <person name="Land M."/>
            <person name="Hauser L."/>
            <person name="Kyrpides N."/>
            <person name="Mikhailova N."/>
            <person name="Balakrishnan V."/>
            <person name="Glasner J."/>
            <person name="Perna N.T."/>
        </authorList>
    </citation>
    <scope>NUCLEOTIDE SEQUENCE [LARGE SCALE GENOMIC DNA]</scope>
    <source>
        <strain>PC1</strain>
    </source>
</reference>
<accession>C6DFE7</accession>
<sequence length="598" mass="66730">MRTNYCGQLNSSHVGQEVTLCGWVNRRRDLGGLIFIDMRDREGLVQVFFDPDRQDAFKLASELRNEFCIQLTGVVRARPESQINKDMATGEVEIFANALTIVNRSEALPLDSNQTNTEEARLKYRYLDLRRPEMAQRLKTRARITSFVRRFMDEHGFLDIETPMLTKATPEGARDYLVPSRVHKGKFYALPQSPQLFKQLLMMSGFDRYYQIVKCFRDEDLRADRQPEFTQIDVETSFMTAPQVREVMEKLVRELWLDVKGVDLGDFPIMTFAEAMRRFGSDKPDLRNPLELVDVADLVKNIDFKVFSGPANDAKGRVAAIRVPGGAQLSRKQIDEYGKFIEIYGAKGLAYIKLNERAKGLEGVQSPVAKFLNADMLSALLDRTAAQDGDILFFGADSAKVVTDALGALRLKLGRDLSLTKDDSWEPLWVVDFPMFEEDGEGGLAAMHHPFTAPRDMLPSELAANPVSAIANAYDMVINGYEVGGGSVRIHNGDMQQTVFSILGITEQEQREKFGFLLDALKYGTPPHAGLAFGLDRLVMLLTGTDNIRDVIAFPKTTAAACLMTEAPSFANPASLEELAIAVVVKGKAAQDGKSENE</sequence>
<proteinExistence type="inferred from homology"/>
<dbReference type="EC" id="6.1.1.12" evidence="1"/>
<dbReference type="EMBL" id="CP001657">
    <property type="protein sequence ID" value="ACT12856.1"/>
    <property type="molecule type" value="Genomic_DNA"/>
</dbReference>
<dbReference type="RefSeq" id="WP_015840061.1">
    <property type="nucleotide sequence ID" value="NC_012917.1"/>
</dbReference>
<dbReference type="SMR" id="C6DFE7"/>
<dbReference type="STRING" id="561230.PC1_1815"/>
<dbReference type="KEGG" id="pct:PC1_1815"/>
<dbReference type="eggNOG" id="COG0173">
    <property type="taxonomic scope" value="Bacteria"/>
</dbReference>
<dbReference type="HOGENOM" id="CLU_014330_3_2_6"/>
<dbReference type="OrthoDB" id="9802326at2"/>
<dbReference type="Proteomes" id="UP000002736">
    <property type="component" value="Chromosome"/>
</dbReference>
<dbReference type="GO" id="GO:0005737">
    <property type="term" value="C:cytoplasm"/>
    <property type="evidence" value="ECO:0007669"/>
    <property type="project" value="UniProtKB-SubCell"/>
</dbReference>
<dbReference type="GO" id="GO:0004815">
    <property type="term" value="F:aspartate-tRNA ligase activity"/>
    <property type="evidence" value="ECO:0007669"/>
    <property type="project" value="UniProtKB-UniRule"/>
</dbReference>
<dbReference type="GO" id="GO:0005524">
    <property type="term" value="F:ATP binding"/>
    <property type="evidence" value="ECO:0007669"/>
    <property type="project" value="UniProtKB-UniRule"/>
</dbReference>
<dbReference type="GO" id="GO:0003676">
    <property type="term" value="F:nucleic acid binding"/>
    <property type="evidence" value="ECO:0007669"/>
    <property type="project" value="InterPro"/>
</dbReference>
<dbReference type="GO" id="GO:0006422">
    <property type="term" value="P:aspartyl-tRNA aminoacylation"/>
    <property type="evidence" value="ECO:0007669"/>
    <property type="project" value="UniProtKB-UniRule"/>
</dbReference>
<dbReference type="CDD" id="cd00777">
    <property type="entry name" value="AspRS_core"/>
    <property type="match status" value="1"/>
</dbReference>
<dbReference type="CDD" id="cd04317">
    <property type="entry name" value="EcAspRS_like_N"/>
    <property type="match status" value="1"/>
</dbReference>
<dbReference type="FunFam" id="2.40.50.140:FF:000080">
    <property type="entry name" value="Aspartate--tRNA ligase"/>
    <property type="match status" value="1"/>
</dbReference>
<dbReference type="Gene3D" id="3.30.930.10">
    <property type="entry name" value="Bira Bifunctional Protein, Domain 2"/>
    <property type="match status" value="1"/>
</dbReference>
<dbReference type="Gene3D" id="3.30.1360.30">
    <property type="entry name" value="GAD-like domain"/>
    <property type="match status" value="1"/>
</dbReference>
<dbReference type="Gene3D" id="2.40.50.140">
    <property type="entry name" value="Nucleic acid-binding proteins"/>
    <property type="match status" value="1"/>
</dbReference>
<dbReference type="HAMAP" id="MF_00044">
    <property type="entry name" value="Asp_tRNA_synth_type1"/>
    <property type="match status" value="1"/>
</dbReference>
<dbReference type="InterPro" id="IPR004364">
    <property type="entry name" value="Aa-tRNA-synt_II"/>
</dbReference>
<dbReference type="InterPro" id="IPR006195">
    <property type="entry name" value="aa-tRNA-synth_II"/>
</dbReference>
<dbReference type="InterPro" id="IPR045864">
    <property type="entry name" value="aa-tRNA-synth_II/BPL/LPL"/>
</dbReference>
<dbReference type="InterPro" id="IPR004524">
    <property type="entry name" value="Asp-tRNA-ligase_1"/>
</dbReference>
<dbReference type="InterPro" id="IPR047089">
    <property type="entry name" value="Asp-tRNA-ligase_1_N"/>
</dbReference>
<dbReference type="InterPro" id="IPR002312">
    <property type="entry name" value="Asp/Asn-tRNA-synth_IIb"/>
</dbReference>
<dbReference type="InterPro" id="IPR047090">
    <property type="entry name" value="AspRS_core"/>
</dbReference>
<dbReference type="InterPro" id="IPR004115">
    <property type="entry name" value="GAD-like_sf"/>
</dbReference>
<dbReference type="InterPro" id="IPR029351">
    <property type="entry name" value="GAD_dom"/>
</dbReference>
<dbReference type="InterPro" id="IPR012340">
    <property type="entry name" value="NA-bd_OB-fold"/>
</dbReference>
<dbReference type="InterPro" id="IPR004365">
    <property type="entry name" value="NA-bd_OB_tRNA"/>
</dbReference>
<dbReference type="NCBIfam" id="TIGR00459">
    <property type="entry name" value="aspS_bact"/>
    <property type="match status" value="1"/>
</dbReference>
<dbReference type="NCBIfam" id="NF001750">
    <property type="entry name" value="PRK00476.1"/>
    <property type="match status" value="1"/>
</dbReference>
<dbReference type="PANTHER" id="PTHR22594:SF5">
    <property type="entry name" value="ASPARTATE--TRNA LIGASE, MITOCHONDRIAL"/>
    <property type="match status" value="1"/>
</dbReference>
<dbReference type="PANTHER" id="PTHR22594">
    <property type="entry name" value="ASPARTYL/LYSYL-TRNA SYNTHETASE"/>
    <property type="match status" value="1"/>
</dbReference>
<dbReference type="Pfam" id="PF02938">
    <property type="entry name" value="GAD"/>
    <property type="match status" value="1"/>
</dbReference>
<dbReference type="Pfam" id="PF00152">
    <property type="entry name" value="tRNA-synt_2"/>
    <property type="match status" value="1"/>
</dbReference>
<dbReference type="Pfam" id="PF01336">
    <property type="entry name" value="tRNA_anti-codon"/>
    <property type="match status" value="1"/>
</dbReference>
<dbReference type="PRINTS" id="PR01042">
    <property type="entry name" value="TRNASYNTHASP"/>
</dbReference>
<dbReference type="SUPFAM" id="SSF55681">
    <property type="entry name" value="Class II aaRS and biotin synthetases"/>
    <property type="match status" value="1"/>
</dbReference>
<dbReference type="SUPFAM" id="SSF55261">
    <property type="entry name" value="GAD domain-like"/>
    <property type="match status" value="1"/>
</dbReference>
<dbReference type="SUPFAM" id="SSF50249">
    <property type="entry name" value="Nucleic acid-binding proteins"/>
    <property type="match status" value="1"/>
</dbReference>
<dbReference type="PROSITE" id="PS50862">
    <property type="entry name" value="AA_TRNA_LIGASE_II"/>
    <property type="match status" value="1"/>
</dbReference>
<protein>
    <recommendedName>
        <fullName evidence="1">Aspartate--tRNA ligase</fullName>
        <ecNumber evidence="1">6.1.1.12</ecNumber>
    </recommendedName>
    <alternativeName>
        <fullName evidence="1">Aspartyl-tRNA synthetase</fullName>
        <shortName evidence="1">AspRS</shortName>
    </alternativeName>
</protein>
<name>SYD_PECCP</name>
<keyword id="KW-0030">Aminoacyl-tRNA synthetase</keyword>
<keyword id="KW-0067">ATP-binding</keyword>
<keyword id="KW-0963">Cytoplasm</keyword>
<keyword id="KW-0436">Ligase</keyword>
<keyword id="KW-0547">Nucleotide-binding</keyword>
<keyword id="KW-0648">Protein biosynthesis</keyword>
<evidence type="ECO:0000255" key="1">
    <source>
        <dbReference type="HAMAP-Rule" id="MF_00044"/>
    </source>
</evidence>
<organism>
    <name type="scientific">Pectobacterium carotovorum subsp. carotovorum (strain PC1)</name>
    <dbReference type="NCBI Taxonomy" id="561230"/>
    <lineage>
        <taxon>Bacteria</taxon>
        <taxon>Pseudomonadati</taxon>
        <taxon>Pseudomonadota</taxon>
        <taxon>Gammaproteobacteria</taxon>
        <taxon>Enterobacterales</taxon>
        <taxon>Pectobacteriaceae</taxon>
        <taxon>Pectobacterium</taxon>
    </lineage>
</organism>
<feature type="chain" id="PRO_1000202164" description="Aspartate--tRNA ligase">
    <location>
        <begin position="1"/>
        <end position="598"/>
    </location>
</feature>
<feature type="region of interest" description="Aspartate" evidence="1">
    <location>
        <begin position="195"/>
        <end position="198"/>
    </location>
</feature>
<feature type="binding site" evidence="1">
    <location>
        <position position="171"/>
    </location>
    <ligand>
        <name>L-aspartate</name>
        <dbReference type="ChEBI" id="CHEBI:29991"/>
    </ligand>
</feature>
<feature type="binding site" evidence="1">
    <location>
        <begin position="217"/>
        <end position="219"/>
    </location>
    <ligand>
        <name>ATP</name>
        <dbReference type="ChEBI" id="CHEBI:30616"/>
    </ligand>
</feature>
<feature type="binding site" evidence="1">
    <location>
        <position position="217"/>
    </location>
    <ligand>
        <name>L-aspartate</name>
        <dbReference type="ChEBI" id="CHEBI:29991"/>
    </ligand>
</feature>
<feature type="binding site" evidence="1">
    <location>
        <position position="226"/>
    </location>
    <ligand>
        <name>ATP</name>
        <dbReference type="ChEBI" id="CHEBI:30616"/>
    </ligand>
</feature>
<feature type="binding site" evidence="1">
    <location>
        <position position="448"/>
    </location>
    <ligand>
        <name>L-aspartate</name>
        <dbReference type="ChEBI" id="CHEBI:29991"/>
    </ligand>
</feature>
<feature type="binding site" evidence="1">
    <location>
        <position position="482"/>
    </location>
    <ligand>
        <name>ATP</name>
        <dbReference type="ChEBI" id="CHEBI:30616"/>
    </ligand>
</feature>
<feature type="binding site" evidence="1">
    <location>
        <position position="489"/>
    </location>
    <ligand>
        <name>L-aspartate</name>
        <dbReference type="ChEBI" id="CHEBI:29991"/>
    </ligand>
</feature>
<feature type="binding site" evidence="1">
    <location>
        <begin position="534"/>
        <end position="537"/>
    </location>
    <ligand>
        <name>ATP</name>
        <dbReference type="ChEBI" id="CHEBI:30616"/>
    </ligand>
</feature>
<comment type="function">
    <text evidence="1">Catalyzes the attachment of L-aspartate to tRNA(Asp) in a two-step reaction: L-aspartate is first activated by ATP to form Asp-AMP and then transferred to the acceptor end of tRNA(Asp).</text>
</comment>
<comment type="catalytic activity">
    <reaction evidence="1">
        <text>tRNA(Asp) + L-aspartate + ATP = L-aspartyl-tRNA(Asp) + AMP + diphosphate</text>
        <dbReference type="Rhea" id="RHEA:19649"/>
        <dbReference type="Rhea" id="RHEA-COMP:9660"/>
        <dbReference type="Rhea" id="RHEA-COMP:9678"/>
        <dbReference type="ChEBI" id="CHEBI:29991"/>
        <dbReference type="ChEBI" id="CHEBI:30616"/>
        <dbReference type="ChEBI" id="CHEBI:33019"/>
        <dbReference type="ChEBI" id="CHEBI:78442"/>
        <dbReference type="ChEBI" id="CHEBI:78516"/>
        <dbReference type="ChEBI" id="CHEBI:456215"/>
        <dbReference type="EC" id="6.1.1.12"/>
    </reaction>
</comment>
<comment type="subunit">
    <text evidence="1">Homodimer.</text>
</comment>
<comment type="subcellular location">
    <subcellularLocation>
        <location evidence="1">Cytoplasm</location>
    </subcellularLocation>
</comment>
<comment type="similarity">
    <text evidence="1">Belongs to the class-II aminoacyl-tRNA synthetase family. Type 1 subfamily.</text>
</comment>
<gene>
    <name evidence="1" type="primary">aspS</name>
    <name type="ordered locus">PC1_1815</name>
</gene>